<dbReference type="EC" id="2.1.3.2" evidence="1"/>
<dbReference type="EMBL" id="AP006878">
    <property type="protein sequence ID" value="BAD86385.1"/>
    <property type="molecule type" value="Genomic_DNA"/>
</dbReference>
<dbReference type="RefSeq" id="WP_011251146.1">
    <property type="nucleotide sequence ID" value="NC_006624.1"/>
</dbReference>
<dbReference type="SMR" id="Q5JHM9"/>
<dbReference type="FunCoup" id="Q5JHM9">
    <property type="interactions" value="176"/>
</dbReference>
<dbReference type="IntAct" id="Q5JHM9">
    <property type="interactions" value="1"/>
</dbReference>
<dbReference type="MINT" id="Q5JHM9"/>
<dbReference type="STRING" id="69014.TK2196"/>
<dbReference type="EnsemblBacteria" id="BAD86385">
    <property type="protein sequence ID" value="BAD86385"/>
    <property type="gene ID" value="TK2196"/>
</dbReference>
<dbReference type="GeneID" id="78448736"/>
<dbReference type="KEGG" id="tko:TK2196"/>
<dbReference type="PATRIC" id="fig|69014.16.peg.2151"/>
<dbReference type="eggNOG" id="arCOG00911">
    <property type="taxonomic scope" value="Archaea"/>
</dbReference>
<dbReference type="HOGENOM" id="CLU_043846_1_2_2"/>
<dbReference type="InParanoid" id="Q5JHM9"/>
<dbReference type="OrthoDB" id="7792at2157"/>
<dbReference type="PhylomeDB" id="Q5JHM9"/>
<dbReference type="UniPathway" id="UPA00070">
    <property type="reaction ID" value="UER00116"/>
</dbReference>
<dbReference type="Proteomes" id="UP000000536">
    <property type="component" value="Chromosome"/>
</dbReference>
<dbReference type="GO" id="GO:0005737">
    <property type="term" value="C:cytoplasm"/>
    <property type="evidence" value="ECO:0000318"/>
    <property type="project" value="GO_Central"/>
</dbReference>
<dbReference type="GO" id="GO:0016597">
    <property type="term" value="F:amino acid binding"/>
    <property type="evidence" value="ECO:0007669"/>
    <property type="project" value="InterPro"/>
</dbReference>
<dbReference type="GO" id="GO:0004070">
    <property type="term" value="F:aspartate carbamoyltransferase activity"/>
    <property type="evidence" value="ECO:0007669"/>
    <property type="project" value="UniProtKB-UniRule"/>
</dbReference>
<dbReference type="GO" id="GO:0006207">
    <property type="term" value="P:'de novo' pyrimidine nucleobase biosynthetic process"/>
    <property type="evidence" value="ECO:0007669"/>
    <property type="project" value="InterPro"/>
</dbReference>
<dbReference type="GO" id="GO:0044205">
    <property type="term" value="P:'de novo' UMP biosynthetic process"/>
    <property type="evidence" value="ECO:0007669"/>
    <property type="project" value="UniProtKB-UniRule"/>
</dbReference>
<dbReference type="GO" id="GO:0006541">
    <property type="term" value="P:glutamine metabolic process"/>
    <property type="evidence" value="ECO:0000318"/>
    <property type="project" value="GO_Central"/>
</dbReference>
<dbReference type="FunFam" id="3.40.50.1370:FF:000001">
    <property type="entry name" value="Aspartate carbamoyltransferase"/>
    <property type="match status" value="1"/>
</dbReference>
<dbReference type="FunFam" id="3.40.50.1370:FF:000021">
    <property type="entry name" value="Aspartate carbamoyltransferase"/>
    <property type="match status" value="1"/>
</dbReference>
<dbReference type="Gene3D" id="3.40.50.1370">
    <property type="entry name" value="Aspartate/ornithine carbamoyltransferase"/>
    <property type="match status" value="2"/>
</dbReference>
<dbReference type="HAMAP" id="MF_00001">
    <property type="entry name" value="Asp_carb_tr"/>
    <property type="match status" value="1"/>
</dbReference>
<dbReference type="InterPro" id="IPR006132">
    <property type="entry name" value="Asp/Orn_carbamoyltranf_P-bd"/>
</dbReference>
<dbReference type="InterPro" id="IPR006130">
    <property type="entry name" value="Asp/Orn_carbamoylTrfase"/>
</dbReference>
<dbReference type="InterPro" id="IPR036901">
    <property type="entry name" value="Asp/Orn_carbamoylTrfase_sf"/>
</dbReference>
<dbReference type="InterPro" id="IPR002082">
    <property type="entry name" value="Asp_carbamoyltransf"/>
</dbReference>
<dbReference type="InterPro" id="IPR006131">
    <property type="entry name" value="Asp_carbamoyltransf_Asp/Orn-bd"/>
</dbReference>
<dbReference type="NCBIfam" id="TIGR00670">
    <property type="entry name" value="asp_carb_tr"/>
    <property type="match status" value="1"/>
</dbReference>
<dbReference type="NCBIfam" id="NF002032">
    <property type="entry name" value="PRK00856.1"/>
    <property type="match status" value="1"/>
</dbReference>
<dbReference type="PANTHER" id="PTHR45753:SF6">
    <property type="entry name" value="ASPARTATE CARBAMOYLTRANSFERASE"/>
    <property type="match status" value="1"/>
</dbReference>
<dbReference type="PANTHER" id="PTHR45753">
    <property type="entry name" value="ORNITHINE CARBAMOYLTRANSFERASE, MITOCHONDRIAL"/>
    <property type="match status" value="1"/>
</dbReference>
<dbReference type="Pfam" id="PF00185">
    <property type="entry name" value="OTCace"/>
    <property type="match status" value="1"/>
</dbReference>
<dbReference type="Pfam" id="PF02729">
    <property type="entry name" value="OTCace_N"/>
    <property type="match status" value="1"/>
</dbReference>
<dbReference type="PRINTS" id="PR00100">
    <property type="entry name" value="AOTCASE"/>
</dbReference>
<dbReference type="PRINTS" id="PR00101">
    <property type="entry name" value="ATCASE"/>
</dbReference>
<dbReference type="SUPFAM" id="SSF53671">
    <property type="entry name" value="Aspartate/ornithine carbamoyltransferase"/>
    <property type="match status" value="1"/>
</dbReference>
<dbReference type="PROSITE" id="PS00097">
    <property type="entry name" value="CARBAMOYLTRANSFERASE"/>
    <property type="match status" value="1"/>
</dbReference>
<proteinExistence type="inferred from homology"/>
<evidence type="ECO:0000255" key="1">
    <source>
        <dbReference type="HAMAP-Rule" id="MF_00001"/>
    </source>
</evidence>
<feature type="chain" id="PRO_0000113257" description="Aspartate carbamoyltransferase catalytic subunit">
    <location>
        <begin position="1"/>
        <end position="310"/>
    </location>
</feature>
<feature type="binding site" evidence="1">
    <location>
        <position position="57"/>
    </location>
    <ligand>
        <name>carbamoyl phosphate</name>
        <dbReference type="ChEBI" id="CHEBI:58228"/>
    </ligand>
</feature>
<feature type="binding site" evidence="1">
    <location>
        <position position="58"/>
    </location>
    <ligand>
        <name>carbamoyl phosphate</name>
        <dbReference type="ChEBI" id="CHEBI:58228"/>
    </ligand>
</feature>
<feature type="binding site" evidence="1">
    <location>
        <position position="86"/>
    </location>
    <ligand>
        <name>L-aspartate</name>
        <dbReference type="ChEBI" id="CHEBI:29991"/>
    </ligand>
</feature>
<feature type="binding site" evidence="1">
    <location>
        <position position="107"/>
    </location>
    <ligand>
        <name>carbamoyl phosphate</name>
        <dbReference type="ChEBI" id="CHEBI:58228"/>
    </ligand>
</feature>
<feature type="binding site" evidence="1">
    <location>
        <position position="135"/>
    </location>
    <ligand>
        <name>carbamoyl phosphate</name>
        <dbReference type="ChEBI" id="CHEBI:58228"/>
    </ligand>
</feature>
<feature type="binding site" evidence="1">
    <location>
        <position position="138"/>
    </location>
    <ligand>
        <name>carbamoyl phosphate</name>
        <dbReference type="ChEBI" id="CHEBI:58228"/>
    </ligand>
</feature>
<feature type="binding site" evidence="1">
    <location>
        <position position="168"/>
    </location>
    <ligand>
        <name>L-aspartate</name>
        <dbReference type="ChEBI" id="CHEBI:29991"/>
    </ligand>
</feature>
<feature type="binding site" evidence="1">
    <location>
        <position position="229"/>
    </location>
    <ligand>
        <name>L-aspartate</name>
        <dbReference type="ChEBI" id="CHEBI:29991"/>
    </ligand>
</feature>
<feature type="binding site" evidence="1">
    <location>
        <position position="268"/>
    </location>
    <ligand>
        <name>carbamoyl phosphate</name>
        <dbReference type="ChEBI" id="CHEBI:58228"/>
    </ligand>
</feature>
<feature type="binding site" evidence="1">
    <location>
        <position position="269"/>
    </location>
    <ligand>
        <name>carbamoyl phosphate</name>
        <dbReference type="ChEBI" id="CHEBI:58228"/>
    </ligand>
</feature>
<name>PYRB_THEKO</name>
<accession>Q5JHM9</accession>
<reference key="1">
    <citation type="journal article" date="2005" name="Genome Res.">
        <title>Complete genome sequence of the hyperthermophilic archaeon Thermococcus kodakaraensis KOD1 and comparison with Pyrococcus genomes.</title>
        <authorList>
            <person name="Fukui T."/>
            <person name="Atomi H."/>
            <person name="Kanai T."/>
            <person name="Matsumi R."/>
            <person name="Fujiwara S."/>
            <person name="Imanaka T."/>
        </authorList>
    </citation>
    <scope>NUCLEOTIDE SEQUENCE [LARGE SCALE GENOMIC DNA]</scope>
    <source>
        <strain>ATCC BAA-918 / JCM 12380 / KOD1</strain>
    </source>
</reference>
<keyword id="KW-0665">Pyrimidine biosynthesis</keyword>
<keyword id="KW-1185">Reference proteome</keyword>
<keyword id="KW-0808">Transferase</keyword>
<protein>
    <recommendedName>
        <fullName evidence="1">Aspartate carbamoyltransferase catalytic subunit</fullName>
        <ecNumber evidence="1">2.1.3.2</ecNumber>
    </recommendedName>
    <alternativeName>
        <fullName evidence="1">Aspartate transcarbamylase</fullName>
        <shortName evidence="1">ATCase</shortName>
    </alternativeName>
</protein>
<comment type="function">
    <text evidence="1">Catalyzes the condensation of carbamoyl phosphate and aspartate to form carbamoyl aspartate and inorganic phosphate, the committed step in the de novo pyrimidine nucleotide biosynthesis pathway.</text>
</comment>
<comment type="catalytic activity">
    <reaction evidence="1">
        <text>carbamoyl phosphate + L-aspartate = N-carbamoyl-L-aspartate + phosphate + H(+)</text>
        <dbReference type="Rhea" id="RHEA:20013"/>
        <dbReference type="ChEBI" id="CHEBI:15378"/>
        <dbReference type="ChEBI" id="CHEBI:29991"/>
        <dbReference type="ChEBI" id="CHEBI:32814"/>
        <dbReference type="ChEBI" id="CHEBI:43474"/>
        <dbReference type="ChEBI" id="CHEBI:58228"/>
        <dbReference type="EC" id="2.1.3.2"/>
    </reaction>
</comment>
<comment type="pathway">
    <text evidence="1">Pyrimidine metabolism; UMP biosynthesis via de novo pathway; (S)-dihydroorotate from bicarbonate: step 2/3.</text>
</comment>
<comment type="subunit">
    <text evidence="1">Heterooligomer of catalytic and regulatory chains.</text>
</comment>
<comment type="similarity">
    <text evidence="1">Belongs to the aspartate/ornithine carbamoyltransferase superfamily. ATCase family.</text>
</comment>
<organism>
    <name type="scientific">Thermococcus kodakarensis (strain ATCC BAA-918 / JCM 12380 / KOD1)</name>
    <name type="common">Pyrococcus kodakaraensis (strain KOD1)</name>
    <dbReference type="NCBI Taxonomy" id="69014"/>
    <lineage>
        <taxon>Archaea</taxon>
        <taxon>Methanobacteriati</taxon>
        <taxon>Methanobacteriota</taxon>
        <taxon>Thermococci</taxon>
        <taxon>Thermococcales</taxon>
        <taxon>Thermococcaceae</taxon>
        <taxon>Thermococcus</taxon>
    </lineage>
</organism>
<sequence length="310" mass="34701">MDWKGRDVISIRDFSKEDIEFVLKVAERLEEELNEKGSLDYARGKILATLFFEPSTRTRLSFESAMHRLGGSVIGFSSASSTSVKKGESLADTIKTVEQYSDVIVIRHPMEGAARLAAEVAGIPVINAGDGSNQHPTQTLLDLYTIKKAFGKIDGLTIGLLGDLKYGRTVHSLAEALAFYDVELYLISPELLRMPKHIVDELRERGVKVYETTDLEGAIPKLDVLYVTRIQRERFPDEEEYLKVKGSYQVNLEVLKNAKETLKVMHPLPRVDEIHPEVDKTKHALYFRQVFSGVPVRMALLGLTLGVLGV</sequence>
<gene>
    <name evidence="1" type="primary">pyrB</name>
    <name type="ordered locus">TK2196</name>
</gene>